<feature type="chain" id="PRO_0000456807" description="Cell cycle regulator CcrZ">
    <location>
        <begin position="1"/>
        <end position="264"/>
    </location>
</feature>
<feature type="short sequence motif" description="Brenner's motif [HXDhX3N]" evidence="5">
    <location>
        <begin position="157"/>
        <end position="164"/>
    </location>
</feature>
<feature type="short sequence motif" description="APH" evidence="5">
    <location>
        <begin position="173"/>
        <end position="196"/>
    </location>
</feature>
<feature type="active site" description="Proton acceptor" evidence="1">
    <location>
        <position position="159"/>
    </location>
</feature>
<feature type="binding site" evidence="1">
    <location>
        <position position="32"/>
    </location>
    <ligand>
        <name>ATP</name>
        <dbReference type="ChEBI" id="CHEBI:30616"/>
    </ligand>
</feature>
<feature type="binding site" evidence="1">
    <location>
        <position position="70"/>
    </location>
    <ligand>
        <name>ATP</name>
        <dbReference type="ChEBI" id="CHEBI:30616"/>
    </ligand>
</feature>
<feature type="binding site" evidence="1">
    <location>
        <position position="73"/>
    </location>
    <ligand>
        <name>ATP</name>
        <dbReference type="ChEBI" id="CHEBI:30616"/>
    </ligand>
</feature>
<feature type="mutagenesis site" description="Growth defects. Is able to localize to the septum." evidence="2">
    <original>H</original>
    <variation>A</variation>
    <location>
        <position position="157"/>
    </location>
</feature>
<feature type="mutagenesis site" description="No effect on growth." evidence="2">
    <original>D</original>
    <variation>A</variation>
    <location>
        <position position="159"/>
    </location>
</feature>
<feature type="mutagenesis site" description="Growth defects." evidence="2">
    <original>N</original>
    <variation>A</variation>
    <location>
        <position position="164"/>
    </location>
</feature>
<feature type="mutagenesis site" description="Growth defects. Is able to localize to the septum." evidence="2">
    <original>D</original>
    <variation>A</variation>
    <location>
        <position position="177"/>
    </location>
</feature>
<feature type="mutagenesis site" description="No effect on growth." evidence="2">
    <original>D</original>
    <variation>A</variation>
    <location>
        <position position="189"/>
    </location>
</feature>
<accession>A0A0H2ZQL5</accession>
<keyword id="KW-0067">ATP-binding</keyword>
<keyword id="KW-0131">Cell cycle</keyword>
<keyword id="KW-0132">Cell division</keyword>
<keyword id="KW-0963">Cytoplasm</keyword>
<keyword id="KW-0227">DNA damage</keyword>
<keyword id="KW-0235">DNA replication</keyword>
<keyword id="KW-0418">Kinase</keyword>
<keyword id="KW-0547">Nucleotide-binding</keyword>
<keyword id="KW-1185">Reference proteome</keyword>
<keyword id="KW-0808">Transferase</keyword>
<organism>
    <name type="scientific">Streptococcus pneumoniae serotype 2 (strain D39 / NCTC 7466)</name>
    <dbReference type="NCBI Taxonomy" id="373153"/>
    <lineage>
        <taxon>Bacteria</taxon>
        <taxon>Bacillati</taxon>
        <taxon>Bacillota</taxon>
        <taxon>Bacilli</taxon>
        <taxon>Lactobacillales</taxon>
        <taxon>Streptococcaceae</taxon>
        <taxon>Streptococcus</taxon>
    </lineage>
</organism>
<proteinExistence type="evidence at protein level"/>
<sequence>MDLGDNELTLTPIPGKSGKAYMGSYPDGKRIFVKMNTSPILPGLAREQIAPQLLWSRRLADGRDMCAQEWLTGKILTPYDMNRKQIVNILTRLHRSRPLMTQLSRLGYAMETPVDLLQSWQETAPDALRKNHFISEVMADLRQTIPGFREDHATIVHGDVRHSNWIETDSGLIYLVDWDSVRLTDRMFDVAHMLCHYISEHQWKEWLTYYGYKYNQTVLSKLYWYGQLSYLSQISKYYMNQDLENVNREIHGLRHFRDKYGKRR</sequence>
<protein>
    <recommendedName>
        <fullName evidence="3">Cell cycle regulator CcrZ</fullName>
        <ecNumber evidence="1">2.7.1.15</ecNumber>
        <ecNumber evidence="1">2.7.1.229</ecNumber>
    </recommendedName>
    <alternativeName>
        <fullName evidence="3">Cell cycle regulator protein interacting with FtsZ</fullName>
    </alternativeName>
</protein>
<name>CCRZ_STRP2</name>
<reference evidence="6" key="1">
    <citation type="journal article" date="2007" name="J. Bacteriol.">
        <title>Genome sequence of Avery's virulent serotype 2 strain D39 of Streptococcus pneumoniae and comparison with that of unencapsulated laboratory strain R6.</title>
        <authorList>
            <person name="Lanie J.A."/>
            <person name="Ng W.-L."/>
            <person name="Kazmierczak K.M."/>
            <person name="Andrzejewski T.M."/>
            <person name="Davidsen T.M."/>
            <person name="Wayne K.J."/>
            <person name="Tettelin H."/>
            <person name="Glass J.I."/>
            <person name="Winkler M.E."/>
        </authorList>
    </citation>
    <scope>NUCLEOTIDE SEQUENCE [LARGE SCALE GENOMIC DNA]</scope>
    <source>
        <strain>D39 / NCTC 7466</strain>
    </source>
</reference>
<reference key="2">
    <citation type="journal article" date="2021" name="Nat. Microbiol.">
        <title>CcrZ is a pneumococcal spatiotemporal cell cycle regulator that interacts with FtsZ and controls DNA replication by modulating the activity of DnaA.</title>
        <authorList>
            <person name="Gallay C."/>
            <person name="Sanselicio S."/>
            <person name="Anderson M.E."/>
            <person name="Soh Y.M."/>
            <person name="Liu X."/>
            <person name="Stamsaas G.A."/>
            <person name="Pelliciari S."/>
            <person name="van Raaphorst R."/>
            <person name="Denereaz J."/>
            <person name="Kjos M."/>
            <person name="Murray H."/>
            <person name="Gruber S."/>
            <person name="Grossman A.D."/>
            <person name="Veening J.W."/>
        </authorList>
    </citation>
    <scope>FUNCTION</scope>
    <scope>INTERACTION WITH FTSZ</scope>
    <scope>SUBCELLULAR LOCATION</scope>
    <scope>DISRUPTION PHENOTYPE</scope>
    <scope>MOTIFS</scope>
    <scope>MUTAGENESIS OF HIS-157; ASP-159; ASN-164; ASP-177 AND ASP-189</scope>
    <source>
        <strain evidence="3">D39V / serotype 2</strain>
    </source>
</reference>
<gene>
    <name evidence="3" type="primary">ccrZ</name>
    <name evidence="6" type="ordered locus">SPD_0476</name>
</gene>
<comment type="function">
    <text evidence="1 2">Plays a role in cell cycle regulation and chromosome integrity. Activates DnaA-dependent chromosomal DNA replication initiation ensuring that the chromosome is replicated at the right time during the cell cycle (PubMed:34373624). May regulate replication initiation through phosphorylation of a possible second messenger or metabolite, and by interacting with replication initiation proteins. Has ATPase activity with D-ribose and 2-deoxy-D-ribose in vitro, but not with choline. Involved in DNA damage response (By similarity).</text>
</comment>
<comment type="catalytic activity">
    <reaction evidence="1">
        <text>D-ribose + ATP = D-ribose 5-phosphate + ADP + H(+)</text>
        <dbReference type="Rhea" id="RHEA:13697"/>
        <dbReference type="ChEBI" id="CHEBI:15378"/>
        <dbReference type="ChEBI" id="CHEBI:30616"/>
        <dbReference type="ChEBI" id="CHEBI:47013"/>
        <dbReference type="ChEBI" id="CHEBI:78346"/>
        <dbReference type="ChEBI" id="CHEBI:456216"/>
        <dbReference type="EC" id="2.7.1.15"/>
    </reaction>
</comment>
<comment type="catalytic activity">
    <reaction evidence="1">
        <text>2-deoxy-D-ribose + ATP = 2-deoxy-D-ribose 5-phosphate + ADP + H(+)</text>
        <dbReference type="Rhea" id="RHEA:30871"/>
        <dbReference type="ChEBI" id="CHEBI:15378"/>
        <dbReference type="ChEBI" id="CHEBI:30616"/>
        <dbReference type="ChEBI" id="CHEBI:62877"/>
        <dbReference type="ChEBI" id="CHEBI:90761"/>
        <dbReference type="ChEBI" id="CHEBI:456216"/>
        <dbReference type="EC" id="2.7.1.229"/>
    </reaction>
</comment>
<comment type="subunit">
    <text evidence="1 2">Monomer in solution. Interacts with DnaA (via domains I (1-82) and III (111-326)). Interacts with DnaB (By similarity). Interacts with FtsZ; the interaction is direct and ensures correct localization during the cell cycle (PubMed:34373624).</text>
</comment>
<comment type="subcellular location">
    <subcellularLocation>
        <location evidence="2">Cytoplasm</location>
    </subcellularLocation>
    <text evidence="2">Localizes at mid-cell, forming a patchy ring. Disassembles from the old septum to assemble at the newly formed division site. Colocalizes with FtsZ during the full cell cycle. Colocalizes with DnaA in newborn cells.</text>
</comment>
<comment type="disruption phenotype">
    <text evidence="2">Dramatic reduction of growth rate and loss of nucleoid. Slight decrease in cell length and cell area. Cells form multiple, often incomplete, septa, and FtsZ and Z-rings are mislocalized, with the presence of several aberrant Z-rings in 43% of the cells. Cells have defective DNA content and they have either no DNA at all or chromosomes are cut during septum closure. In many cells, the chromosome is localized at only one half of the cell. Mis-timed and significantly decreased DNA replication initiation rate, the phenotype of which can be suppressed by missense mutants DnaA-Q247H or DnaA-S292G, or nonsense mutant YabA-E93. Capsule production is not affected.</text>
</comment>
<comment type="similarity">
    <text evidence="4">Belongs to the aminoglycoside phosphotransferase family.</text>
</comment>
<dbReference type="EC" id="2.7.1.15" evidence="1"/>
<dbReference type="EC" id="2.7.1.229" evidence="1"/>
<dbReference type="EMBL" id="CP000410">
    <property type="protein sequence ID" value="ABJ55230.1"/>
    <property type="molecule type" value="Genomic_DNA"/>
</dbReference>
<dbReference type="RefSeq" id="WP_000363002.1">
    <property type="nucleotide sequence ID" value="NZ_JAMLJR010000001.1"/>
</dbReference>
<dbReference type="SMR" id="A0A0H2ZQL5"/>
<dbReference type="PaxDb" id="373153-SPD_0476"/>
<dbReference type="GeneID" id="45654032"/>
<dbReference type="KEGG" id="spd:SPD_0476"/>
<dbReference type="eggNOG" id="COG0510">
    <property type="taxonomic scope" value="Bacteria"/>
</dbReference>
<dbReference type="HOGENOM" id="CLU_093117_0_0_9"/>
<dbReference type="BioCyc" id="SPNE373153:G1G6V-525-MONOMER"/>
<dbReference type="Proteomes" id="UP000001452">
    <property type="component" value="Chromosome"/>
</dbReference>
<dbReference type="GO" id="GO:0032153">
    <property type="term" value="C:cell division site"/>
    <property type="evidence" value="ECO:0000314"/>
    <property type="project" value="UniProtKB"/>
</dbReference>
<dbReference type="GO" id="GO:0005737">
    <property type="term" value="C:cytoplasm"/>
    <property type="evidence" value="ECO:0000314"/>
    <property type="project" value="UniProtKB"/>
</dbReference>
<dbReference type="GO" id="GO:0005524">
    <property type="term" value="F:ATP binding"/>
    <property type="evidence" value="ECO:0007669"/>
    <property type="project" value="UniProtKB-KW"/>
</dbReference>
<dbReference type="GO" id="GO:0019200">
    <property type="term" value="F:carbohydrate kinase activity"/>
    <property type="evidence" value="ECO:0000250"/>
    <property type="project" value="UniProtKB"/>
</dbReference>
<dbReference type="GO" id="GO:0016773">
    <property type="term" value="F:phosphotransferase activity, alcohol group as acceptor"/>
    <property type="evidence" value="ECO:0000250"/>
    <property type="project" value="UniProtKB"/>
</dbReference>
<dbReference type="GO" id="GO:0004747">
    <property type="term" value="F:ribokinase activity"/>
    <property type="evidence" value="ECO:0000250"/>
    <property type="project" value="UniProtKB"/>
</dbReference>
<dbReference type="GO" id="GO:0051301">
    <property type="term" value="P:cell division"/>
    <property type="evidence" value="ECO:0000315"/>
    <property type="project" value="UniProtKB"/>
</dbReference>
<dbReference type="GO" id="GO:0006974">
    <property type="term" value="P:DNA damage response"/>
    <property type="evidence" value="ECO:0000250"/>
    <property type="project" value="UniProtKB"/>
</dbReference>
<dbReference type="GO" id="GO:0006270">
    <property type="term" value="P:DNA replication initiation"/>
    <property type="evidence" value="ECO:0000315"/>
    <property type="project" value="UniProtKB"/>
</dbReference>
<dbReference type="GO" id="GO:0051726">
    <property type="term" value="P:regulation of cell cycle"/>
    <property type="evidence" value="ECO:0000315"/>
    <property type="project" value="UniProtKB"/>
</dbReference>
<dbReference type="Gene3D" id="3.90.1200.10">
    <property type="match status" value="1"/>
</dbReference>
<dbReference type="InterPro" id="IPR002575">
    <property type="entry name" value="Aminoglycoside_PTrfase"/>
</dbReference>
<dbReference type="InterPro" id="IPR052077">
    <property type="entry name" value="CcrZ_PhaseVar_Mediator"/>
</dbReference>
<dbReference type="InterPro" id="IPR011009">
    <property type="entry name" value="Kinase-like_dom_sf"/>
</dbReference>
<dbReference type="NCBIfam" id="NF046102">
    <property type="entry name" value="CellCycRegCcrZ"/>
    <property type="match status" value="1"/>
</dbReference>
<dbReference type="PANTHER" id="PTHR40086:SF1">
    <property type="entry name" value="CELL CYCLE REGULATOR CCRZ"/>
    <property type="match status" value="1"/>
</dbReference>
<dbReference type="PANTHER" id="PTHR40086">
    <property type="entry name" value="PHOSPHOTRANSFERASE YTMP-RELATED"/>
    <property type="match status" value="1"/>
</dbReference>
<dbReference type="Pfam" id="PF01636">
    <property type="entry name" value="APH"/>
    <property type="match status" value="1"/>
</dbReference>
<dbReference type="SUPFAM" id="SSF56112">
    <property type="entry name" value="Protein kinase-like (PK-like)"/>
    <property type="match status" value="1"/>
</dbReference>
<evidence type="ECO:0000250" key="1">
    <source>
        <dbReference type="UniProtKB" id="C0SPC1"/>
    </source>
</evidence>
<evidence type="ECO:0000269" key="2">
    <source>
    </source>
</evidence>
<evidence type="ECO:0000303" key="3">
    <source>
    </source>
</evidence>
<evidence type="ECO:0000305" key="4"/>
<evidence type="ECO:0000305" key="5">
    <source>
    </source>
</evidence>
<evidence type="ECO:0000312" key="6">
    <source>
        <dbReference type="EMBL" id="ABJ55230.1"/>
    </source>
</evidence>